<protein>
    <recommendedName>
        <fullName evidence="1">Chaperonin GroEL</fullName>
        <ecNumber evidence="1">5.6.1.7</ecNumber>
    </recommendedName>
    <alternativeName>
        <fullName evidence="1">60 kDa chaperonin</fullName>
    </alternativeName>
    <alternativeName>
        <fullName evidence="1">Chaperonin-60</fullName>
        <shortName evidence="1">Cpn60</shortName>
    </alternativeName>
</protein>
<accession>O51832</accession>
<accession>Q93T48</accession>
<sequence length="548" mass="57883">MAAKDVKFGNEARIKMLRGVNVLADAVKVTLGPKGRNVVLDKSFGAPSITKDGVSVAREIELEDKFENMGAQMVKEVASKANDAAGDGTTTATLLAQSIVNEGLKAVAAGMNPMDLKRGIDKAVISAVEELKNLSVPCSDSKAITQVGTISANADEKVGALIAEAMEKVGNDGVITVEEGTGLQNELEVVKGMQFDRGYLSPYFINKPETGIVELENPYILVADKKISNVREMLPILESVAKSGKPLLIISEDLEGEALATLVVNSMRGIVKVAAVKAPGFGDRRKAMLQDISILTGGSVISEELAMELEKSTLEDLGQAKRVVISKDTTTIIGGVGEKHTIQSRISQIRQEIQEATSDYDKEKLNERLAKLSGGVAVLKVGAATEVEMKEKKARVEDALHATRAAVEEGVVAGGGVALVRVAGKTSNLRGQNEDQNVGIRVALRAMEAPLRQIVSNSGEEPSVVTNNVKDGKGNYGYNAATDEYGDMIDFGILDPTKVTRSALQYAASVAGLMITTECMVTDLPKEDKSSDSNSSPAGGMGGMGGMM</sequence>
<feature type="chain" id="PRO_0000063309" description="Chaperonin GroEL">
    <location>
        <begin position="1"/>
        <end position="548"/>
    </location>
</feature>
<feature type="region of interest" description="Disordered" evidence="2">
    <location>
        <begin position="524"/>
        <end position="548"/>
    </location>
</feature>
<feature type="compositionally biased region" description="Gly residues" evidence="2">
    <location>
        <begin position="539"/>
        <end position="548"/>
    </location>
</feature>
<feature type="binding site" evidence="1">
    <location>
        <begin position="30"/>
        <end position="33"/>
    </location>
    <ligand>
        <name>ATP</name>
        <dbReference type="ChEBI" id="CHEBI:30616"/>
    </ligand>
</feature>
<feature type="binding site" evidence="1">
    <location>
        <position position="51"/>
    </location>
    <ligand>
        <name>ATP</name>
        <dbReference type="ChEBI" id="CHEBI:30616"/>
    </ligand>
</feature>
<feature type="binding site" evidence="1">
    <location>
        <begin position="87"/>
        <end position="91"/>
    </location>
    <ligand>
        <name>ATP</name>
        <dbReference type="ChEBI" id="CHEBI:30616"/>
    </ligand>
</feature>
<feature type="binding site" evidence="1">
    <location>
        <position position="415"/>
    </location>
    <ligand>
        <name>ATP</name>
        <dbReference type="ChEBI" id="CHEBI:30616"/>
    </ligand>
</feature>
<feature type="binding site" evidence="1">
    <location>
        <begin position="479"/>
        <end position="481"/>
    </location>
    <ligand>
        <name>ATP</name>
        <dbReference type="ChEBI" id="CHEBI:30616"/>
    </ligand>
</feature>
<feature type="binding site" evidence="1">
    <location>
        <position position="495"/>
    </location>
    <ligand>
        <name>ATP</name>
        <dbReference type="ChEBI" id="CHEBI:30616"/>
    </ligand>
</feature>
<feature type="sequence conflict" description="In Ref. 2; AAK52957." evidence="3" ref="2">
    <original>M</original>
    <variation>K</variation>
    <location>
        <position position="111"/>
    </location>
</feature>
<feature type="sequence conflict" description="In Ref. 2; AAK52957." evidence="3" ref="2">
    <original>V</original>
    <variation>M</variation>
    <location>
        <position position="222"/>
    </location>
</feature>
<feature type="sequence conflict" description="In Ref. 2; AAK52957." evidence="3" ref="2">
    <original>Q</original>
    <variation>H</variation>
    <location>
        <position position="348"/>
    </location>
</feature>
<proteinExistence type="inferred from homology"/>
<keyword id="KW-0067">ATP-binding</keyword>
<keyword id="KW-0143">Chaperone</keyword>
<keyword id="KW-0963">Cytoplasm</keyword>
<keyword id="KW-0413">Isomerase</keyword>
<keyword id="KW-0547">Nucleotide-binding</keyword>
<evidence type="ECO:0000255" key="1">
    <source>
        <dbReference type="HAMAP-Rule" id="MF_00600"/>
    </source>
</evidence>
<evidence type="ECO:0000256" key="2">
    <source>
        <dbReference type="SAM" id="MobiDB-lite"/>
    </source>
</evidence>
<evidence type="ECO:0000305" key="3"/>
<dbReference type="EC" id="5.6.1.7" evidence="1"/>
<dbReference type="EMBL" id="AF003957">
    <property type="protein sequence ID" value="AAC04237.1"/>
    <property type="molecule type" value="Genomic_DNA"/>
</dbReference>
<dbReference type="EMBL" id="AF367248">
    <property type="protein sequence ID" value="AAK52957.1"/>
    <property type="molecule type" value="Genomic_DNA"/>
</dbReference>
<dbReference type="SMR" id="O51832"/>
<dbReference type="GO" id="GO:0005737">
    <property type="term" value="C:cytoplasm"/>
    <property type="evidence" value="ECO:0007669"/>
    <property type="project" value="UniProtKB-SubCell"/>
</dbReference>
<dbReference type="GO" id="GO:0005524">
    <property type="term" value="F:ATP binding"/>
    <property type="evidence" value="ECO:0007669"/>
    <property type="project" value="UniProtKB-UniRule"/>
</dbReference>
<dbReference type="GO" id="GO:0140662">
    <property type="term" value="F:ATP-dependent protein folding chaperone"/>
    <property type="evidence" value="ECO:0007669"/>
    <property type="project" value="InterPro"/>
</dbReference>
<dbReference type="GO" id="GO:0016853">
    <property type="term" value="F:isomerase activity"/>
    <property type="evidence" value="ECO:0007669"/>
    <property type="project" value="UniProtKB-KW"/>
</dbReference>
<dbReference type="GO" id="GO:0051082">
    <property type="term" value="F:unfolded protein binding"/>
    <property type="evidence" value="ECO:0007669"/>
    <property type="project" value="UniProtKB-UniRule"/>
</dbReference>
<dbReference type="GO" id="GO:0042026">
    <property type="term" value="P:protein refolding"/>
    <property type="evidence" value="ECO:0007669"/>
    <property type="project" value="UniProtKB-UniRule"/>
</dbReference>
<dbReference type="CDD" id="cd03344">
    <property type="entry name" value="GroEL"/>
    <property type="match status" value="1"/>
</dbReference>
<dbReference type="FunFam" id="1.10.560.10:FF:000001">
    <property type="entry name" value="60 kDa chaperonin"/>
    <property type="match status" value="1"/>
</dbReference>
<dbReference type="FunFam" id="3.50.7.10:FF:000001">
    <property type="entry name" value="60 kDa chaperonin"/>
    <property type="match status" value="1"/>
</dbReference>
<dbReference type="Gene3D" id="3.50.7.10">
    <property type="entry name" value="GroEL"/>
    <property type="match status" value="1"/>
</dbReference>
<dbReference type="Gene3D" id="1.10.560.10">
    <property type="entry name" value="GroEL-like equatorial domain"/>
    <property type="match status" value="1"/>
</dbReference>
<dbReference type="Gene3D" id="3.30.260.10">
    <property type="entry name" value="TCP-1-like chaperonin intermediate domain"/>
    <property type="match status" value="1"/>
</dbReference>
<dbReference type="HAMAP" id="MF_00600">
    <property type="entry name" value="CH60"/>
    <property type="match status" value="1"/>
</dbReference>
<dbReference type="InterPro" id="IPR018370">
    <property type="entry name" value="Chaperonin_Cpn60_CS"/>
</dbReference>
<dbReference type="InterPro" id="IPR001844">
    <property type="entry name" value="Cpn60/GroEL"/>
</dbReference>
<dbReference type="InterPro" id="IPR002423">
    <property type="entry name" value="Cpn60/GroEL/TCP-1"/>
</dbReference>
<dbReference type="InterPro" id="IPR027409">
    <property type="entry name" value="GroEL-like_apical_dom_sf"/>
</dbReference>
<dbReference type="InterPro" id="IPR027413">
    <property type="entry name" value="GROEL-like_equatorial_sf"/>
</dbReference>
<dbReference type="InterPro" id="IPR027410">
    <property type="entry name" value="TCP-1-like_intermed_sf"/>
</dbReference>
<dbReference type="NCBIfam" id="TIGR02348">
    <property type="entry name" value="GroEL"/>
    <property type="match status" value="1"/>
</dbReference>
<dbReference type="NCBIfam" id="NF000592">
    <property type="entry name" value="PRK00013.1"/>
    <property type="match status" value="1"/>
</dbReference>
<dbReference type="NCBIfam" id="NF009487">
    <property type="entry name" value="PRK12849.1"/>
    <property type="match status" value="1"/>
</dbReference>
<dbReference type="NCBIfam" id="NF009488">
    <property type="entry name" value="PRK12850.1"/>
    <property type="match status" value="1"/>
</dbReference>
<dbReference type="NCBIfam" id="NF009489">
    <property type="entry name" value="PRK12851.1"/>
    <property type="match status" value="1"/>
</dbReference>
<dbReference type="PANTHER" id="PTHR45633">
    <property type="entry name" value="60 KDA HEAT SHOCK PROTEIN, MITOCHONDRIAL"/>
    <property type="match status" value="1"/>
</dbReference>
<dbReference type="Pfam" id="PF00118">
    <property type="entry name" value="Cpn60_TCP1"/>
    <property type="match status" value="1"/>
</dbReference>
<dbReference type="PRINTS" id="PR00298">
    <property type="entry name" value="CHAPERONIN60"/>
</dbReference>
<dbReference type="SUPFAM" id="SSF52029">
    <property type="entry name" value="GroEL apical domain-like"/>
    <property type="match status" value="1"/>
</dbReference>
<dbReference type="SUPFAM" id="SSF48592">
    <property type="entry name" value="GroEL equatorial domain-like"/>
    <property type="match status" value="1"/>
</dbReference>
<dbReference type="SUPFAM" id="SSF54849">
    <property type="entry name" value="GroEL-intermediate domain like"/>
    <property type="match status" value="1"/>
</dbReference>
<dbReference type="PROSITE" id="PS00296">
    <property type="entry name" value="CHAPERONINS_CPN60"/>
    <property type="match status" value="1"/>
</dbReference>
<gene>
    <name evidence="1" type="primary">groEL</name>
    <name evidence="1" type="synonym">groL</name>
    <name type="synonym">mopA</name>
    <name type="synonym">symL</name>
</gene>
<comment type="function">
    <text evidence="1">Together with its co-chaperonin GroES, plays an essential role in assisting protein folding. The GroEL-GroES system forms a nano-cage that allows encapsulation of the non-native substrate proteins and provides a physical environment optimized to promote and accelerate protein folding.</text>
</comment>
<comment type="catalytic activity">
    <reaction evidence="1">
        <text>ATP + H2O + a folded polypeptide = ADP + phosphate + an unfolded polypeptide.</text>
        <dbReference type="EC" id="5.6.1.7"/>
    </reaction>
</comment>
<comment type="subunit">
    <text evidence="1">Forms a cylinder of 14 subunits composed of two heptameric rings stacked back-to-back. Interacts with the co-chaperonin GroES.</text>
</comment>
<comment type="subcellular location">
    <subcellularLocation>
        <location evidence="1">Cytoplasm</location>
    </subcellularLocation>
</comment>
<comment type="similarity">
    <text evidence="1">Belongs to the chaperonin (HSP60) family.</text>
</comment>
<name>CH60_BUCMP</name>
<organism>
    <name type="scientific">Buchnera aphidicola subsp. Myzus persicae</name>
    <name type="common">Myzus persicae primary endosymbiont</name>
    <dbReference type="NCBI Taxonomy" id="98795"/>
    <lineage>
        <taxon>Bacteria</taxon>
        <taxon>Pseudomonadati</taxon>
        <taxon>Pseudomonadota</taxon>
        <taxon>Gammaproteobacteria</taxon>
        <taxon>Enterobacterales</taxon>
        <taxon>Erwiniaceae</taxon>
        <taxon>Buchnera</taxon>
    </lineage>
</organism>
<reference key="1">
    <citation type="journal article" date="1998" name="J. Virol.">
        <title>Potato leafroll virus binds to the equatorial domain of the aphid endosymbiotic GroEL homolog.</title>
        <authorList>
            <person name="Hogenhout S.A."/>
            <person name="van der Wilk F."/>
            <person name="Verbeek M."/>
            <person name="Goldbach R.W."/>
            <person name="van den Heuvel J.F.J.M."/>
        </authorList>
    </citation>
    <scope>NUCLEOTIDE SEQUENCE [GENOMIC DNA]</scope>
</reference>
<reference key="2">
    <citation type="submission" date="2001-03" db="EMBL/GenBank/DDBJ databases">
        <authorList>
            <person name="Cui X."/>
            <person name="Wu Y."/>
            <person name="Lin L."/>
        </authorList>
    </citation>
    <scope>NUCLEOTIDE SEQUENCE [GENOMIC DNA]</scope>
</reference>